<organism evidence="13">
    <name type="scientific">Drosophila melanogaster</name>
    <name type="common">Fruit fly</name>
    <dbReference type="NCBI Taxonomy" id="7227"/>
    <lineage>
        <taxon>Eukaryota</taxon>
        <taxon>Metazoa</taxon>
        <taxon>Ecdysozoa</taxon>
        <taxon>Arthropoda</taxon>
        <taxon>Hexapoda</taxon>
        <taxon>Insecta</taxon>
        <taxon>Pterygota</taxon>
        <taxon>Neoptera</taxon>
        <taxon>Endopterygota</taxon>
        <taxon>Diptera</taxon>
        <taxon>Brachycera</taxon>
        <taxon>Muscomorpha</taxon>
        <taxon>Ephydroidea</taxon>
        <taxon>Drosophilidae</taxon>
        <taxon>Drosophila</taxon>
        <taxon>Sophophora</taxon>
    </lineage>
</organism>
<gene>
    <name evidence="12" type="primary">CtsL1</name>
    <name evidence="9 12" type="synonym">Cp1</name>
    <name evidence="12" type="synonym">fs(2)50Ca</name>
    <name evidence="12" type="ORF">CG6692</name>
</gene>
<sequence>MNHLGVFETRFRPRTRHKSQRAQLIPEQITMRTAVLLPLLALLAVAQAVSFADVVMEEWHTFKLEHRKNYQDETEERFRLKIFNENKHKIAKHNQRFAEGKVSFKLAVNKYADLLHHEFRQLMNGFNYTLHKQLRAADESFKGVTFISPAHVTLPKSVDWRTKGAVTAVKDQGHCGSCWAFSSTGALEGQHFRKSGVLVSLSEQNLVDCSTKYGNNGCNGGLMDNAFRYIKDNGGIDTEKSYPYEAIDDSCHFNKGTVGATDRGFTDIPQGDEKKMAEAVATVGPVSVAIDASHESFQFYSEGVYNEPQCDAQNLDHGVLVVGFGTDESGEDYWLVKNSWGTTWGDKGFIKMLRNKENQCGIASASSYPLV</sequence>
<proteinExistence type="evidence at transcript level"/>
<keyword id="KW-0025">Alternative splicing</keyword>
<keyword id="KW-0217">Developmental protein</keyword>
<keyword id="KW-0222">Digestion</keyword>
<keyword id="KW-1015">Disulfide bond</keyword>
<keyword id="KW-0325">Glycoprotein</keyword>
<keyword id="KW-0378">Hydrolase</keyword>
<keyword id="KW-0458">Lysosome</keyword>
<keyword id="KW-0645">Protease</keyword>
<keyword id="KW-1185">Reference proteome</keyword>
<keyword id="KW-0732">Signal</keyword>
<keyword id="KW-0788">Thiol protease</keyword>
<keyword id="KW-0865">Zymogen</keyword>
<name>CATL1_DROME</name>
<protein>
    <recommendedName>
        <fullName evidence="12">Cathepsin L1</fullName>
        <ecNumber>3.4.22.15</ecNumber>
    </recommendedName>
    <alternativeName>
        <fullName evidence="9">Cysteine proteinase 1</fullName>
    </alternativeName>
    <component>
        <recommendedName>
            <fullName>Cathepsin L heavy chain</fullName>
        </recommendedName>
    </component>
    <component>
        <recommendedName>
            <fullName>Cathepsin L light chain</fullName>
        </recommendedName>
    </component>
</protein>
<dbReference type="EC" id="3.4.22.15"/>
<dbReference type="EMBL" id="U75652">
    <property type="protein sequence ID" value="AAB18345.1"/>
    <property type="molecule type" value="mRNA"/>
</dbReference>
<dbReference type="EMBL" id="AF012089">
    <property type="protein sequence ID" value="AAB65749.1"/>
    <property type="molecule type" value="Genomic_DNA"/>
</dbReference>
<dbReference type="EMBL" id="AE013599">
    <property type="protein sequence ID" value="AAF58311.1"/>
    <property type="molecule type" value="Genomic_DNA"/>
</dbReference>
<dbReference type="EMBL" id="AE013599">
    <property type="protein sequence ID" value="AAM68565.1"/>
    <property type="molecule type" value="Genomic_DNA"/>
</dbReference>
<dbReference type="EMBL" id="BT016071">
    <property type="protein sequence ID" value="AAV36956.1"/>
    <property type="molecule type" value="mRNA"/>
</dbReference>
<dbReference type="EMBL" id="D31970">
    <property type="protein sequence ID" value="BAA06738.1"/>
    <property type="status" value="ALT_SEQ"/>
    <property type="molecule type" value="Genomic_DNA"/>
</dbReference>
<dbReference type="RefSeq" id="NP_523735.2">
    <molecule id="Q95029-1"/>
    <property type="nucleotide sequence ID" value="NM_079011.3"/>
</dbReference>
<dbReference type="RefSeq" id="NP_725347.1">
    <molecule id="Q95029-2"/>
    <property type="nucleotide sequence ID" value="NM_166026.3"/>
</dbReference>
<dbReference type="SMR" id="Q95029"/>
<dbReference type="BioGRID" id="62300">
    <property type="interactions" value="48"/>
</dbReference>
<dbReference type="FunCoup" id="Q95029">
    <property type="interactions" value="351"/>
</dbReference>
<dbReference type="IntAct" id="Q95029">
    <property type="interactions" value="13"/>
</dbReference>
<dbReference type="STRING" id="7227.FBpp0086719"/>
<dbReference type="MEROPS" id="C01.092"/>
<dbReference type="GlyCosmos" id="Q95029">
    <property type="glycosylation" value="1 site, No reported glycans"/>
</dbReference>
<dbReference type="GlyGen" id="Q95029">
    <property type="glycosylation" value="1 site"/>
</dbReference>
<dbReference type="PaxDb" id="7227-FBpp0086719"/>
<dbReference type="DNASU" id="36546"/>
<dbReference type="EnsemblMetazoa" id="FBtr0087592">
    <molecule id="Q95029-2"/>
    <property type="protein sequence ID" value="FBpp0086718"/>
    <property type="gene ID" value="FBgn0013770"/>
</dbReference>
<dbReference type="EnsemblMetazoa" id="FBtr0087593">
    <molecule id="Q95029-1"/>
    <property type="protein sequence ID" value="FBpp0086719"/>
    <property type="gene ID" value="FBgn0013770"/>
</dbReference>
<dbReference type="GeneID" id="36546"/>
<dbReference type="KEGG" id="dme:Dmel_CG6692"/>
<dbReference type="AGR" id="FB:FBgn0013770"/>
<dbReference type="CTD" id="36546"/>
<dbReference type="FlyBase" id="FBgn0013770">
    <property type="gene designation" value="CtsL1"/>
</dbReference>
<dbReference type="VEuPathDB" id="VectorBase:FBgn0013770"/>
<dbReference type="eggNOG" id="KOG1543">
    <property type="taxonomic scope" value="Eukaryota"/>
</dbReference>
<dbReference type="GeneTree" id="ENSGT00940000153321"/>
<dbReference type="InParanoid" id="Q95029"/>
<dbReference type="OMA" id="IKEEWHT"/>
<dbReference type="OrthoDB" id="10253408at2759"/>
<dbReference type="PhylomeDB" id="Q95029"/>
<dbReference type="Reactome" id="R-DME-1474228">
    <property type="pathway name" value="Degradation of the extracellular matrix"/>
</dbReference>
<dbReference type="Reactome" id="R-DME-1592389">
    <property type="pathway name" value="Activation of Matrix Metalloproteinases"/>
</dbReference>
<dbReference type="Reactome" id="R-DME-2132295">
    <property type="pathway name" value="MHC class II antigen presentation"/>
</dbReference>
<dbReference type="Reactome" id="R-DME-6798695">
    <property type="pathway name" value="Neutrophil degranulation"/>
</dbReference>
<dbReference type="Reactome" id="R-DME-8939242">
    <property type="pathway name" value="RUNX1 regulates transcription of genes involved in differentiation of keratinocytes"/>
</dbReference>
<dbReference type="SignaLink" id="Q95029"/>
<dbReference type="BioGRID-ORCS" id="36546">
    <property type="hits" value="0 hits in 3 CRISPR screens"/>
</dbReference>
<dbReference type="GenomeRNAi" id="36546"/>
<dbReference type="PRO" id="PR:Q95029"/>
<dbReference type="Proteomes" id="UP000000803">
    <property type="component" value="Chromosome 2R"/>
</dbReference>
<dbReference type="Bgee" id="FBgn0013770">
    <property type="expression patterns" value="Expressed in hemocyte (sensu Nematoda and Protostomia) in arthropod fat body and 292 other cell types or tissues"/>
</dbReference>
<dbReference type="ExpressionAtlas" id="Q95029">
    <property type="expression patterns" value="baseline and differential"/>
</dbReference>
<dbReference type="GO" id="GO:0044754">
    <property type="term" value="C:autolysosome"/>
    <property type="evidence" value="ECO:0000315"/>
    <property type="project" value="FlyBase"/>
</dbReference>
<dbReference type="GO" id="GO:0005615">
    <property type="term" value="C:extracellular space"/>
    <property type="evidence" value="ECO:0000318"/>
    <property type="project" value="GO_Central"/>
</dbReference>
<dbReference type="GO" id="GO:0045169">
    <property type="term" value="C:fusome"/>
    <property type="evidence" value="ECO:0000314"/>
    <property type="project" value="FlyBase"/>
</dbReference>
<dbReference type="GO" id="GO:0005770">
    <property type="term" value="C:late endosome"/>
    <property type="evidence" value="ECO:0000314"/>
    <property type="project" value="FlyBase"/>
</dbReference>
<dbReference type="GO" id="GO:0005764">
    <property type="term" value="C:lysosome"/>
    <property type="evidence" value="ECO:0000314"/>
    <property type="project" value="FlyBase"/>
</dbReference>
<dbReference type="GO" id="GO:0004197">
    <property type="term" value="F:cysteine-type endopeptidase activity"/>
    <property type="evidence" value="ECO:0000314"/>
    <property type="project" value="FlyBase"/>
</dbReference>
<dbReference type="GO" id="GO:0008234">
    <property type="term" value="F:cysteine-type peptidase activity"/>
    <property type="evidence" value="ECO:0000314"/>
    <property type="project" value="FlyBase"/>
</dbReference>
<dbReference type="GO" id="GO:0008233">
    <property type="term" value="F:peptidase activity"/>
    <property type="evidence" value="ECO:0000314"/>
    <property type="project" value="FlyBase"/>
</dbReference>
<dbReference type="GO" id="GO:0007586">
    <property type="term" value="P:digestion"/>
    <property type="evidence" value="ECO:0007669"/>
    <property type="project" value="UniProtKB-KW"/>
</dbReference>
<dbReference type="GO" id="GO:0006508">
    <property type="term" value="P:proteolysis"/>
    <property type="evidence" value="ECO:0000314"/>
    <property type="project" value="FlyBase"/>
</dbReference>
<dbReference type="GO" id="GO:0051603">
    <property type="term" value="P:proteolysis involved in protein catabolic process"/>
    <property type="evidence" value="ECO:0000315"/>
    <property type="project" value="FlyBase"/>
</dbReference>
<dbReference type="CDD" id="cd02248">
    <property type="entry name" value="Peptidase_C1A"/>
    <property type="match status" value="1"/>
</dbReference>
<dbReference type="FunFam" id="2.40.50.170:FF:000001">
    <property type="entry name" value="Cathepsin L1"/>
    <property type="match status" value="1"/>
</dbReference>
<dbReference type="FunFam" id="3.90.70.10:FF:000006">
    <property type="entry name" value="Cathepsin S"/>
    <property type="match status" value="1"/>
</dbReference>
<dbReference type="Gene3D" id="3.90.70.10">
    <property type="entry name" value="Cysteine proteinases"/>
    <property type="match status" value="1"/>
</dbReference>
<dbReference type="InterPro" id="IPR038765">
    <property type="entry name" value="Papain-like_cys_pep_sf"/>
</dbReference>
<dbReference type="InterPro" id="IPR025661">
    <property type="entry name" value="Pept_asp_AS"/>
</dbReference>
<dbReference type="InterPro" id="IPR000169">
    <property type="entry name" value="Pept_cys_AS"/>
</dbReference>
<dbReference type="InterPro" id="IPR025660">
    <property type="entry name" value="Pept_his_AS"/>
</dbReference>
<dbReference type="InterPro" id="IPR013128">
    <property type="entry name" value="Peptidase_C1A"/>
</dbReference>
<dbReference type="InterPro" id="IPR000668">
    <property type="entry name" value="Peptidase_C1A_C"/>
</dbReference>
<dbReference type="InterPro" id="IPR039417">
    <property type="entry name" value="Peptidase_C1A_papain-like"/>
</dbReference>
<dbReference type="InterPro" id="IPR013201">
    <property type="entry name" value="Prot_inhib_I29"/>
</dbReference>
<dbReference type="PANTHER" id="PTHR12411">
    <property type="entry name" value="CYSTEINE PROTEASE FAMILY C1-RELATED"/>
    <property type="match status" value="1"/>
</dbReference>
<dbReference type="Pfam" id="PF08246">
    <property type="entry name" value="Inhibitor_I29"/>
    <property type="match status" value="1"/>
</dbReference>
<dbReference type="Pfam" id="PF00112">
    <property type="entry name" value="Peptidase_C1"/>
    <property type="match status" value="1"/>
</dbReference>
<dbReference type="PRINTS" id="PR00705">
    <property type="entry name" value="PAPAIN"/>
</dbReference>
<dbReference type="SMART" id="SM00848">
    <property type="entry name" value="Inhibitor_I29"/>
    <property type="match status" value="1"/>
</dbReference>
<dbReference type="SMART" id="SM00645">
    <property type="entry name" value="Pept_C1"/>
    <property type="match status" value="1"/>
</dbReference>
<dbReference type="SUPFAM" id="SSF54001">
    <property type="entry name" value="Cysteine proteinases"/>
    <property type="match status" value="1"/>
</dbReference>
<dbReference type="PROSITE" id="PS00640">
    <property type="entry name" value="THIOL_PROTEASE_ASN"/>
    <property type="match status" value="1"/>
</dbReference>
<dbReference type="PROSITE" id="PS00139">
    <property type="entry name" value="THIOL_PROTEASE_CYS"/>
    <property type="match status" value="1"/>
</dbReference>
<dbReference type="PROSITE" id="PS00639">
    <property type="entry name" value="THIOL_PROTEASE_HIS"/>
    <property type="match status" value="1"/>
</dbReference>
<reference key="1">
    <citation type="journal article" date="1997" name="Insect Mol. Biol.">
        <title>Cysteine proteinase 1 (CP1), a cathepsin L-like enzyme expressed in the Drosophila melanogaster haemocyte cell line mbn-2.</title>
        <authorList>
            <person name="Tryselius Y."/>
            <person name="Hultmark D."/>
        </authorList>
    </citation>
    <scope>NUCLEOTIDE SEQUENCE [MRNA] (ISOFORM A)</scope>
    <scope>FUNCTION</scope>
    <scope>SUBCELLULAR LOCATION</scope>
    <source>
        <tissue>Hemocyte</tissue>
    </source>
</reference>
<reference key="2">
    <citation type="journal article" date="1998" name="Insect Mol. Biol.">
        <title>Structure and associated mutational effects of the cysteine proteinase (CP1) gene of Drosophila melanogaster.</title>
        <authorList>
            <person name="Gray Y.H.M."/>
            <person name="Sved J.A."/>
            <person name="Preston C.R."/>
            <person name="Engels W.R."/>
        </authorList>
    </citation>
    <scope>NUCLEOTIDE SEQUENCE [GENOMIC DNA]</scope>
    <scope>FUNCTION</scope>
    <scope>DISRUPTION PHENOTYPE</scope>
</reference>
<reference key="3">
    <citation type="journal article" date="2000" name="Science">
        <title>The genome sequence of Drosophila melanogaster.</title>
        <authorList>
            <person name="Adams M.D."/>
            <person name="Celniker S.E."/>
            <person name="Holt R.A."/>
            <person name="Evans C.A."/>
            <person name="Gocayne J.D."/>
            <person name="Amanatides P.G."/>
            <person name="Scherer S.E."/>
            <person name="Li P.W."/>
            <person name="Hoskins R.A."/>
            <person name="Galle R.F."/>
            <person name="George R.A."/>
            <person name="Lewis S.E."/>
            <person name="Richards S."/>
            <person name="Ashburner M."/>
            <person name="Henderson S.N."/>
            <person name="Sutton G.G."/>
            <person name="Wortman J.R."/>
            <person name="Yandell M.D."/>
            <person name="Zhang Q."/>
            <person name="Chen L.X."/>
            <person name="Brandon R.C."/>
            <person name="Rogers Y.-H.C."/>
            <person name="Blazej R.G."/>
            <person name="Champe M."/>
            <person name="Pfeiffer B.D."/>
            <person name="Wan K.H."/>
            <person name="Doyle C."/>
            <person name="Baxter E.G."/>
            <person name="Helt G."/>
            <person name="Nelson C.R."/>
            <person name="Miklos G.L.G."/>
            <person name="Abril J.F."/>
            <person name="Agbayani A."/>
            <person name="An H.-J."/>
            <person name="Andrews-Pfannkoch C."/>
            <person name="Baldwin D."/>
            <person name="Ballew R.M."/>
            <person name="Basu A."/>
            <person name="Baxendale J."/>
            <person name="Bayraktaroglu L."/>
            <person name="Beasley E.M."/>
            <person name="Beeson K.Y."/>
            <person name="Benos P.V."/>
            <person name="Berman B.P."/>
            <person name="Bhandari D."/>
            <person name="Bolshakov S."/>
            <person name="Borkova D."/>
            <person name="Botchan M.R."/>
            <person name="Bouck J."/>
            <person name="Brokstein P."/>
            <person name="Brottier P."/>
            <person name="Burtis K.C."/>
            <person name="Busam D.A."/>
            <person name="Butler H."/>
            <person name="Cadieu E."/>
            <person name="Center A."/>
            <person name="Chandra I."/>
            <person name="Cherry J.M."/>
            <person name="Cawley S."/>
            <person name="Dahlke C."/>
            <person name="Davenport L.B."/>
            <person name="Davies P."/>
            <person name="de Pablos B."/>
            <person name="Delcher A."/>
            <person name="Deng Z."/>
            <person name="Mays A.D."/>
            <person name="Dew I."/>
            <person name="Dietz S.M."/>
            <person name="Dodson K."/>
            <person name="Doup L.E."/>
            <person name="Downes M."/>
            <person name="Dugan-Rocha S."/>
            <person name="Dunkov B.C."/>
            <person name="Dunn P."/>
            <person name="Durbin K.J."/>
            <person name="Evangelista C.C."/>
            <person name="Ferraz C."/>
            <person name="Ferriera S."/>
            <person name="Fleischmann W."/>
            <person name="Fosler C."/>
            <person name="Gabrielian A.E."/>
            <person name="Garg N.S."/>
            <person name="Gelbart W.M."/>
            <person name="Glasser K."/>
            <person name="Glodek A."/>
            <person name="Gong F."/>
            <person name="Gorrell J.H."/>
            <person name="Gu Z."/>
            <person name="Guan P."/>
            <person name="Harris M."/>
            <person name="Harris N.L."/>
            <person name="Harvey D.A."/>
            <person name="Heiman T.J."/>
            <person name="Hernandez J.R."/>
            <person name="Houck J."/>
            <person name="Hostin D."/>
            <person name="Houston K.A."/>
            <person name="Howland T.J."/>
            <person name="Wei M.-H."/>
            <person name="Ibegwam C."/>
            <person name="Jalali M."/>
            <person name="Kalush F."/>
            <person name="Karpen G.H."/>
            <person name="Ke Z."/>
            <person name="Kennison J.A."/>
            <person name="Ketchum K.A."/>
            <person name="Kimmel B.E."/>
            <person name="Kodira C.D."/>
            <person name="Kraft C.L."/>
            <person name="Kravitz S."/>
            <person name="Kulp D."/>
            <person name="Lai Z."/>
            <person name="Lasko P."/>
            <person name="Lei Y."/>
            <person name="Levitsky A.A."/>
            <person name="Li J.H."/>
            <person name="Li Z."/>
            <person name="Liang Y."/>
            <person name="Lin X."/>
            <person name="Liu X."/>
            <person name="Mattei B."/>
            <person name="McIntosh T.C."/>
            <person name="McLeod M.P."/>
            <person name="McPherson D."/>
            <person name="Merkulov G."/>
            <person name="Milshina N.V."/>
            <person name="Mobarry C."/>
            <person name="Morris J."/>
            <person name="Moshrefi A."/>
            <person name="Mount S.M."/>
            <person name="Moy M."/>
            <person name="Murphy B."/>
            <person name="Murphy L."/>
            <person name="Muzny D.M."/>
            <person name="Nelson D.L."/>
            <person name="Nelson D.R."/>
            <person name="Nelson K.A."/>
            <person name="Nixon K."/>
            <person name="Nusskern D.R."/>
            <person name="Pacleb J.M."/>
            <person name="Palazzolo M."/>
            <person name="Pittman G.S."/>
            <person name="Pan S."/>
            <person name="Pollard J."/>
            <person name="Puri V."/>
            <person name="Reese M.G."/>
            <person name="Reinert K."/>
            <person name="Remington K."/>
            <person name="Saunders R.D.C."/>
            <person name="Scheeler F."/>
            <person name="Shen H."/>
            <person name="Shue B.C."/>
            <person name="Siden-Kiamos I."/>
            <person name="Simpson M."/>
            <person name="Skupski M.P."/>
            <person name="Smith T.J."/>
            <person name="Spier E."/>
            <person name="Spradling A.C."/>
            <person name="Stapleton M."/>
            <person name="Strong R."/>
            <person name="Sun E."/>
            <person name="Svirskas R."/>
            <person name="Tector C."/>
            <person name="Turner R."/>
            <person name="Venter E."/>
            <person name="Wang A.H."/>
            <person name="Wang X."/>
            <person name="Wang Z.-Y."/>
            <person name="Wassarman D.A."/>
            <person name="Weinstock G.M."/>
            <person name="Weissenbach J."/>
            <person name="Williams S.M."/>
            <person name="Woodage T."/>
            <person name="Worley K.C."/>
            <person name="Wu D."/>
            <person name="Yang S."/>
            <person name="Yao Q.A."/>
            <person name="Ye J."/>
            <person name="Yeh R.-F."/>
            <person name="Zaveri J.S."/>
            <person name="Zhan M."/>
            <person name="Zhang G."/>
            <person name="Zhao Q."/>
            <person name="Zheng L."/>
            <person name="Zheng X.H."/>
            <person name="Zhong F.N."/>
            <person name="Zhong W."/>
            <person name="Zhou X."/>
            <person name="Zhu S.C."/>
            <person name="Zhu X."/>
            <person name="Smith H.O."/>
            <person name="Gibbs R.A."/>
            <person name="Myers E.W."/>
            <person name="Rubin G.M."/>
            <person name="Venter J.C."/>
        </authorList>
    </citation>
    <scope>NUCLEOTIDE SEQUENCE [LARGE SCALE GENOMIC DNA]</scope>
    <source>
        <strain>Berkeley</strain>
    </source>
</reference>
<reference key="4">
    <citation type="journal article" date="2002" name="Genome Biol.">
        <title>Annotation of the Drosophila melanogaster euchromatic genome: a systematic review.</title>
        <authorList>
            <person name="Misra S."/>
            <person name="Crosby M.A."/>
            <person name="Mungall C.J."/>
            <person name="Matthews B.B."/>
            <person name="Campbell K.S."/>
            <person name="Hradecky P."/>
            <person name="Huang Y."/>
            <person name="Kaminker J.S."/>
            <person name="Millburn G.H."/>
            <person name="Prochnik S.E."/>
            <person name="Smith C.D."/>
            <person name="Tupy J.L."/>
            <person name="Whitfield E.J."/>
            <person name="Bayraktaroglu L."/>
            <person name="Berman B.P."/>
            <person name="Bettencourt B.R."/>
            <person name="Celniker S.E."/>
            <person name="de Grey A.D.N.J."/>
            <person name="Drysdale R.A."/>
            <person name="Harris N.L."/>
            <person name="Richter J."/>
            <person name="Russo S."/>
            <person name="Schroeder A.J."/>
            <person name="Shu S.Q."/>
            <person name="Stapleton M."/>
            <person name="Yamada C."/>
            <person name="Ashburner M."/>
            <person name="Gelbart W.M."/>
            <person name="Rubin G.M."/>
            <person name="Lewis S.E."/>
        </authorList>
    </citation>
    <scope>GENOME REANNOTATION</scope>
    <scope>ALTERNATIVE SPLICING</scope>
    <source>
        <strain>Berkeley</strain>
    </source>
</reference>
<reference key="5">
    <citation type="submission" date="2004-10" db="EMBL/GenBank/DDBJ databases">
        <authorList>
            <person name="Stapleton M."/>
            <person name="Carlson J.W."/>
            <person name="Chavez C."/>
            <person name="Frise E."/>
            <person name="George R.A."/>
            <person name="Pacleb J.M."/>
            <person name="Park S."/>
            <person name="Wan K.H."/>
            <person name="Yu C."/>
            <person name="Rubin G.M."/>
            <person name="Celniker S.E."/>
        </authorList>
    </citation>
    <scope>NUCLEOTIDE SEQUENCE [LARGE SCALE MRNA] (ISOFORM A)</scope>
    <source>
        <strain>Berkeley</strain>
        <tissue>Larva</tissue>
        <tissue>Pupae</tissue>
    </source>
</reference>
<reference key="6">
    <citation type="journal article" date="1995" name="Eur. J. Biochem.">
        <title>A putative digestive cysteine proteinase from Drosophila melanogaster is predominantly expressed in the embryonic and larval midgut.</title>
        <authorList>
            <person name="Matsumoto I."/>
            <person name="Watanabe H."/>
            <person name="Abe K."/>
            <person name="Arai S."/>
            <person name="Emori Y."/>
        </authorList>
    </citation>
    <scope>NUCLEOTIDE SEQUENCE [GENOMIC DNA] OF 64-371</scope>
    <scope>FUNCTION</scope>
    <scope>TISSUE SPECIFICITY</scope>
    <scope>DEVELOPMENTAL STAGE</scope>
    <source>
        <strain>Canton-S</strain>
    </source>
</reference>
<accession>Q95029</accession>
<accession>O97431</accession>
<accession>Q5U121</accession>
<comment type="function">
    <text evidence="6 7 8">Important for the overall degradation of proteins in lysosomes. Essential for adult male and female fertility. May play a role in digestion.</text>
</comment>
<comment type="catalytic activity">
    <reaction>
        <text>Specificity close to that of papain. As compared to cathepsin B, cathepsin L exhibits higher activity toward protein substrates, but has little activity on Z-Arg-Arg-NHMec, and no peptidyl-dipeptidase activity.</text>
        <dbReference type="EC" id="3.4.22.15"/>
    </reaction>
</comment>
<comment type="subunit">
    <text>Dimer of a heavy and a light chain linked by disulfide bonds.</text>
</comment>
<comment type="subcellular location">
    <subcellularLocation>
        <location evidence="7">Lysosome</location>
    </subcellularLocation>
</comment>
<comment type="alternative products">
    <event type="alternative splicing"/>
    <isoform>
        <id>Q95029-1</id>
        <name>C</name>
        <sequence type="displayed"/>
    </isoform>
    <isoform>
        <id>Q95029-2</id>
        <name>A</name>
        <name>B</name>
        <sequence type="described" ref="VSP_021771"/>
    </isoform>
</comment>
<comment type="tissue specificity">
    <text evidence="6">In the embryo, predominantly expressed in the midgut. Also expressed in larval alimentary organs such as salivary gland and midgut including gastric caeca.</text>
</comment>
<comment type="developmental stage">
    <text evidence="6">Expressed in embryo, larva, pupa and adult.</text>
</comment>
<comment type="disruption phenotype">
    <text evidence="8">Flies exhibit wing and pigmentation defects. Females are sterile, males are partially sterile.</text>
</comment>
<comment type="similarity">
    <text evidence="3 4 5">Belongs to the peptidase C1 family.</text>
</comment>
<comment type="sequence caution" evidence="11">
    <conflict type="miscellaneous discrepancy">
        <sequence resource="EMBL-CDS" id="BAA06738"/>
    </conflict>
    <text>Intron retention.</text>
</comment>
<evidence type="ECO:0000250" key="1"/>
<evidence type="ECO:0000255" key="2"/>
<evidence type="ECO:0000255" key="3">
    <source>
        <dbReference type="PROSITE-ProRule" id="PRU10088"/>
    </source>
</evidence>
<evidence type="ECO:0000255" key="4">
    <source>
        <dbReference type="PROSITE-ProRule" id="PRU10089"/>
    </source>
</evidence>
<evidence type="ECO:0000255" key="5">
    <source>
        <dbReference type="PROSITE-ProRule" id="PRU10090"/>
    </source>
</evidence>
<evidence type="ECO:0000269" key="6">
    <source>
    </source>
</evidence>
<evidence type="ECO:0000269" key="7">
    <source>
    </source>
</evidence>
<evidence type="ECO:0000269" key="8">
    <source>
    </source>
</evidence>
<evidence type="ECO:0000303" key="9">
    <source>
    </source>
</evidence>
<evidence type="ECO:0000303" key="10">
    <source ref="5"/>
</evidence>
<evidence type="ECO:0000305" key="11"/>
<evidence type="ECO:0000312" key="12">
    <source>
        <dbReference type="FlyBase" id="FBgn0013770"/>
    </source>
</evidence>
<evidence type="ECO:0000312" key="13">
    <source>
        <dbReference type="Proteomes" id="UP000000803"/>
    </source>
</evidence>
<feature type="signal peptide" evidence="2">
    <location>
        <begin position="1"/>
        <end position="48"/>
    </location>
</feature>
<feature type="propeptide" id="PRO_0000026265" description="Activation peptide">
    <location>
        <begin position="49"/>
        <end position="153"/>
    </location>
</feature>
<feature type="chain" id="PRO_0000026266" description="Cathepsin L heavy chain">
    <location>
        <begin position="154"/>
        <end position="326"/>
    </location>
</feature>
<feature type="propeptide" id="PRO_0000026267">
    <location>
        <begin position="327"/>
        <end position="329"/>
    </location>
</feature>
<feature type="chain" id="PRO_0000026268" description="Cathepsin L light chain">
    <location>
        <begin position="330"/>
        <end position="371"/>
    </location>
</feature>
<feature type="active site" evidence="1">
    <location>
        <position position="178"/>
    </location>
</feature>
<feature type="active site" evidence="1">
    <location>
        <position position="317"/>
    </location>
</feature>
<feature type="active site" evidence="1">
    <location>
        <position position="338"/>
    </location>
</feature>
<feature type="glycosylation site" description="N-linked (GlcNAc...) asparagine" evidence="2">
    <location>
        <position position="127"/>
    </location>
</feature>
<feature type="disulfide bond" evidence="1">
    <location>
        <begin position="175"/>
        <end position="218"/>
    </location>
</feature>
<feature type="disulfide bond" evidence="1">
    <location>
        <begin position="209"/>
        <end position="251"/>
    </location>
</feature>
<feature type="disulfide bond" description="Interchain (between heavy and light chains)" evidence="1">
    <location>
        <begin position="310"/>
        <end position="360"/>
    </location>
</feature>
<feature type="splice variant" id="VSP_021771" description="In isoform A." evidence="9 10">
    <location>
        <begin position="2"/>
        <end position="31"/>
    </location>
</feature>
<feature type="sequence conflict" description="In Ref. 6; BAA06738." evidence="11" ref="6">
    <original>R</original>
    <variation>P</variation>
    <location>
        <position position="228"/>
    </location>
</feature>
<feature type="sequence conflict" description="In Ref. 6; BAA06738." evidence="11" ref="6">
    <original>KGT</original>
    <variation>RAQ</variation>
    <location>
        <begin position="255"/>
        <end position="257"/>
    </location>
</feature>
<feature type="sequence conflict" description="In Ref. 6; BAA06738." evidence="11" ref="6">
    <original>AEAVA</original>
    <variation>PEPVP</variation>
    <location>
        <begin position="277"/>
        <end position="281"/>
    </location>
</feature>
<feature type="sequence conflict" description="In Ref. 6; BAA06738." evidence="11" ref="6">
    <original>A</original>
    <variation>P</variation>
    <location>
        <position position="365"/>
    </location>
</feature>